<comment type="function">
    <text>May be associated with transposition functions of transposon Tn903.</text>
</comment>
<organism>
    <name type="scientific">Escherichia coli</name>
    <dbReference type="NCBI Taxonomy" id="562"/>
    <lineage>
        <taxon>Bacteria</taxon>
        <taxon>Pseudomonadati</taxon>
        <taxon>Pseudomonadota</taxon>
        <taxon>Gammaproteobacteria</taxon>
        <taxon>Enterobacterales</taxon>
        <taxon>Enterobacteriaceae</taxon>
        <taxon>Escherichia</taxon>
    </lineage>
</organism>
<proteinExistence type="predicted"/>
<reference key="1">
    <citation type="journal article" date="1981" name="J. Mol. Biol.">
        <title>Nucleotide sequence of the kanamycin resistance transposon Tn903.</title>
        <authorList>
            <person name="Oka A."/>
            <person name="Sugisaki H."/>
            <person name="Takanami M."/>
        </authorList>
    </citation>
    <scope>NUCLEOTIDE SEQUENCE [GENOMIC DNA]</scope>
</reference>
<reference key="2">
    <citation type="journal article" date="1980" name="Proc. Natl. Acad. Sci. U.S.A.">
        <title>Genetic and DNA sequence analysis of the kanamycin resistance transposon Tn903.</title>
        <authorList>
            <person name="Grindley N.D.F."/>
            <person name="Joyce C.M."/>
        </authorList>
    </citation>
    <scope>NUCLEOTIDE SEQUENCE [GENOMIC DNA]</scope>
</reference>
<accession>P03839</accession>
<feature type="chain" id="PRO_0000066521" description="Uncharacterized 12.7 kDa protein in transposon Tn903">
    <location>
        <begin position="1"/>
        <end position="114"/>
    </location>
</feature>
<sequence>MCFTVNGEMQLTPDTAAFLAMLFDFPFAFTKDLQPGGINHQMRDFTPGERFETDINRLCPPADTAVIRAAQRNIHQCKNGINKALRSAQGQPEYAFNDQHSRDGKVRIALRSAS</sequence>
<protein>
    <recommendedName>
        <fullName>Uncharacterized 12.7 kDa protein in transposon Tn903</fullName>
    </recommendedName>
</protein>
<dbReference type="EMBL" id="V00621">
    <property type="protein sequence ID" value="CAA23896.1"/>
    <property type="molecule type" value="Genomic_DNA"/>
</dbReference>
<dbReference type="EMBL" id="V00359">
    <property type="protein sequence ID" value="CAA23655.1"/>
    <property type="molecule type" value="Genomic_DNA"/>
</dbReference>
<dbReference type="PIR" id="B92864">
    <property type="entry name" value="QQECT9"/>
</dbReference>
<keyword id="KW-0814">Transposable element</keyword>
<name>YT93_ECOLX</name>